<accession>Q1MNB0</accession>
<keyword id="KW-0963">Cytoplasm</keyword>
<keyword id="KW-0329">Glyoxylate bypass</keyword>
<keyword id="KW-0460">Magnesium</keyword>
<keyword id="KW-0479">Metal-binding</keyword>
<keyword id="KW-0558">Oxidation</keyword>
<keyword id="KW-0808">Transferase</keyword>
<keyword id="KW-0816">Tricarboxylic acid cycle</keyword>
<proteinExistence type="inferred from homology"/>
<reference key="1">
    <citation type="journal article" date="2006" name="Genome Biol.">
        <title>The genome of Rhizobium leguminosarum has recognizable core and accessory components.</title>
        <authorList>
            <person name="Young J.P.W."/>
            <person name="Crossman L.C."/>
            <person name="Johnston A.W.B."/>
            <person name="Thomson N.R."/>
            <person name="Ghazoui Z.F."/>
            <person name="Hull K.H."/>
            <person name="Wexler M."/>
            <person name="Curson A.R.J."/>
            <person name="Todd J.D."/>
            <person name="Poole P.S."/>
            <person name="Mauchline T.H."/>
            <person name="East A.K."/>
            <person name="Quail M.A."/>
            <person name="Churcher C."/>
            <person name="Arrowsmith C."/>
            <person name="Cherevach I."/>
            <person name="Chillingworth T."/>
            <person name="Clarke K."/>
            <person name="Cronin A."/>
            <person name="Davis P."/>
            <person name="Fraser A."/>
            <person name="Hance Z."/>
            <person name="Hauser H."/>
            <person name="Jagels K."/>
            <person name="Moule S."/>
            <person name="Mungall K."/>
            <person name="Norbertczak H."/>
            <person name="Rabbinowitsch E."/>
            <person name="Sanders M."/>
            <person name="Simmonds M."/>
            <person name="Whitehead S."/>
            <person name="Parkhill J."/>
        </authorList>
    </citation>
    <scope>NUCLEOTIDE SEQUENCE [LARGE SCALE GENOMIC DNA]</scope>
    <source>
        <strain>DSM 114642 / LMG 32736 / 3841</strain>
    </source>
</reference>
<name>MASZ_RHIJ3</name>
<gene>
    <name evidence="1" type="primary">glcB</name>
    <name type="ordered locus">RL0054</name>
</gene>
<evidence type="ECO:0000255" key="1">
    <source>
        <dbReference type="HAMAP-Rule" id="MF_00641"/>
    </source>
</evidence>
<dbReference type="EC" id="2.3.3.9" evidence="1"/>
<dbReference type="EMBL" id="AM236080">
    <property type="protein sequence ID" value="CAK05542.1"/>
    <property type="molecule type" value="Genomic_DNA"/>
</dbReference>
<dbReference type="RefSeq" id="WP_011649878.1">
    <property type="nucleotide sequence ID" value="NC_008380.1"/>
</dbReference>
<dbReference type="SMR" id="Q1MNB0"/>
<dbReference type="EnsemblBacteria" id="CAK05542">
    <property type="protein sequence ID" value="CAK05542"/>
    <property type="gene ID" value="RL0054"/>
</dbReference>
<dbReference type="KEGG" id="rle:RL0054"/>
<dbReference type="eggNOG" id="COG2225">
    <property type="taxonomic scope" value="Bacteria"/>
</dbReference>
<dbReference type="HOGENOM" id="CLU_028446_1_0_5"/>
<dbReference type="UniPathway" id="UPA00703">
    <property type="reaction ID" value="UER00720"/>
</dbReference>
<dbReference type="Proteomes" id="UP000006575">
    <property type="component" value="Chromosome"/>
</dbReference>
<dbReference type="GO" id="GO:0005829">
    <property type="term" value="C:cytosol"/>
    <property type="evidence" value="ECO:0007669"/>
    <property type="project" value="TreeGrafter"/>
</dbReference>
<dbReference type="GO" id="GO:0000287">
    <property type="term" value="F:magnesium ion binding"/>
    <property type="evidence" value="ECO:0007669"/>
    <property type="project" value="TreeGrafter"/>
</dbReference>
<dbReference type="GO" id="GO:0004474">
    <property type="term" value="F:malate synthase activity"/>
    <property type="evidence" value="ECO:0007669"/>
    <property type="project" value="UniProtKB-UniRule"/>
</dbReference>
<dbReference type="GO" id="GO:0009436">
    <property type="term" value="P:glyoxylate catabolic process"/>
    <property type="evidence" value="ECO:0007669"/>
    <property type="project" value="TreeGrafter"/>
</dbReference>
<dbReference type="GO" id="GO:0006097">
    <property type="term" value="P:glyoxylate cycle"/>
    <property type="evidence" value="ECO:0007669"/>
    <property type="project" value="UniProtKB-UniRule"/>
</dbReference>
<dbReference type="GO" id="GO:0006099">
    <property type="term" value="P:tricarboxylic acid cycle"/>
    <property type="evidence" value="ECO:0007669"/>
    <property type="project" value="UniProtKB-KW"/>
</dbReference>
<dbReference type="CDD" id="cd00728">
    <property type="entry name" value="malate_synt_G"/>
    <property type="match status" value="1"/>
</dbReference>
<dbReference type="FunFam" id="3.20.20.360:FF:000002">
    <property type="entry name" value="Malate synthase G"/>
    <property type="match status" value="1"/>
</dbReference>
<dbReference type="Gene3D" id="3.20.20.360">
    <property type="entry name" value="Malate synthase, domain 3"/>
    <property type="match status" value="2"/>
</dbReference>
<dbReference type="Gene3D" id="1.20.1220.12">
    <property type="entry name" value="Malate synthase, domain III"/>
    <property type="match status" value="1"/>
</dbReference>
<dbReference type="HAMAP" id="MF_00641">
    <property type="entry name" value="Malate_synth_G"/>
    <property type="match status" value="1"/>
</dbReference>
<dbReference type="InterPro" id="IPR044856">
    <property type="entry name" value="Malate_synth_C_sf"/>
</dbReference>
<dbReference type="InterPro" id="IPR011076">
    <property type="entry name" value="Malate_synth_sf"/>
</dbReference>
<dbReference type="InterPro" id="IPR001465">
    <property type="entry name" value="Malate_synthase_TIM"/>
</dbReference>
<dbReference type="InterPro" id="IPR006253">
    <property type="entry name" value="Malate_synthG"/>
</dbReference>
<dbReference type="InterPro" id="IPR048355">
    <property type="entry name" value="MS_C"/>
</dbReference>
<dbReference type="InterPro" id="IPR048356">
    <property type="entry name" value="MS_N"/>
</dbReference>
<dbReference type="InterPro" id="IPR046363">
    <property type="entry name" value="MS_N_TIM-barrel_dom"/>
</dbReference>
<dbReference type="InterPro" id="IPR048357">
    <property type="entry name" value="MSG_insertion"/>
</dbReference>
<dbReference type="NCBIfam" id="TIGR01345">
    <property type="entry name" value="malate_syn_G"/>
    <property type="match status" value="1"/>
</dbReference>
<dbReference type="NCBIfam" id="NF002825">
    <property type="entry name" value="PRK02999.1"/>
    <property type="match status" value="1"/>
</dbReference>
<dbReference type="PANTHER" id="PTHR42739">
    <property type="entry name" value="MALATE SYNTHASE G"/>
    <property type="match status" value="1"/>
</dbReference>
<dbReference type="PANTHER" id="PTHR42739:SF1">
    <property type="entry name" value="MALATE SYNTHASE G"/>
    <property type="match status" value="1"/>
</dbReference>
<dbReference type="Pfam" id="PF20659">
    <property type="entry name" value="MS_C"/>
    <property type="match status" value="1"/>
</dbReference>
<dbReference type="Pfam" id="PF20656">
    <property type="entry name" value="MS_N"/>
    <property type="match status" value="1"/>
</dbReference>
<dbReference type="Pfam" id="PF01274">
    <property type="entry name" value="MS_TIM-barrel"/>
    <property type="match status" value="1"/>
</dbReference>
<dbReference type="Pfam" id="PF20658">
    <property type="entry name" value="MSG_insertion"/>
    <property type="match status" value="1"/>
</dbReference>
<dbReference type="SUPFAM" id="SSF51645">
    <property type="entry name" value="Malate synthase G"/>
    <property type="match status" value="1"/>
</dbReference>
<organism>
    <name type="scientific">Rhizobium johnstonii (strain DSM 114642 / LMG 32736 / 3841)</name>
    <name type="common">Rhizobium leguminosarum bv. viciae</name>
    <dbReference type="NCBI Taxonomy" id="216596"/>
    <lineage>
        <taxon>Bacteria</taxon>
        <taxon>Pseudomonadati</taxon>
        <taxon>Pseudomonadota</taxon>
        <taxon>Alphaproteobacteria</taxon>
        <taxon>Hyphomicrobiales</taxon>
        <taxon>Rhizobiaceae</taxon>
        <taxon>Rhizobium/Agrobacterium group</taxon>
        <taxon>Rhizobium</taxon>
        <taxon>Rhizobium johnstonii</taxon>
    </lineage>
</organism>
<feature type="chain" id="PRO_1000056922" description="Malate synthase G">
    <location>
        <begin position="1"/>
        <end position="723"/>
    </location>
</feature>
<feature type="active site" description="Proton acceptor" evidence="1">
    <location>
        <position position="338"/>
    </location>
</feature>
<feature type="active site" description="Proton donor" evidence="1">
    <location>
        <position position="629"/>
    </location>
</feature>
<feature type="binding site" evidence="1">
    <location>
        <position position="116"/>
    </location>
    <ligand>
        <name>acetyl-CoA</name>
        <dbReference type="ChEBI" id="CHEBI:57288"/>
    </ligand>
</feature>
<feature type="binding site" evidence="1">
    <location>
        <begin position="123"/>
        <end position="124"/>
    </location>
    <ligand>
        <name>acetyl-CoA</name>
        <dbReference type="ChEBI" id="CHEBI:57288"/>
    </ligand>
</feature>
<feature type="binding site" evidence="1">
    <location>
        <position position="274"/>
    </location>
    <ligand>
        <name>acetyl-CoA</name>
        <dbReference type="ChEBI" id="CHEBI:57288"/>
    </ligand>
</feature>
<feature type="binding site" evidence="1">
    <location>
        <position position="311"/>
    </location>
    <ligand>
        <name>acetyl-CoA</name>
        <dbReference type="ChEBI" id="CHEBI:57288"/>
    </ligand>
</feature>
<feature type="binding site" evidence="1">
    <location>
        <position position="338"/>
    </location>
    <ligand>
        <name>glyoxylate</name>
        <dbReference type="ChEBI" id="CHEBI:36655"/>
    </ligand>
</feature>
<feature type="binding site" evidence="1">
    <location>
        <position position="430"/>
    </location>
    <ligand>
        <name>glyoxylate</name>
        <dbReference type="ChEBI" id="CHEBI:36655"/>
    </ligand>
</feature>
<feature type="binding site" evidence="1">
    <location>
        <position position="430"/>
    </location>
    <ligand>
        <name>Mg(2+)</name>
        <dbReference type="ChEBI" id="CHEBI:18420"/>
    </ligand>
</feature>
<feature type="binding site" evidence="1">
    <location>
        <begin position="455"/>
        <end position="458"/>
    </location>
    <ligand>
        <name>glyoxylate</name>
        <dbReference type="ChEBI" id="CHEBI:36655"/>
    </ligand>
</feature>
<feature type="binding site" evidence="1">
    <location>
        <position position="458"/>
    </location>
    <ligand>
        <name>Mg(2+)</name>
        <dbReference type="ChEBI" id="CHEBI:18420"/>
    </ligand>
</feature>
<feature type="binding site" evidence="1">
    <location>
        <position position="539"/>
    </location>
    <ligand>
        <name>acetyl-CoA</name>
        <dbReference type="ChEBI" id="CHEBI:57288"/>
    </ligand>
</feature>
<feature type="modified residue" description="Cysteine sulfenic acid (-SOH)" evidence="1">
    <location>
        <position position="615"/>
    </location>
</feature>
<comment type="function">
    <text evidence="1">Involved in the glycolate utilization. Catalyzes the condensation and subsequent hydrolysis of acetyl-coenzyme A (acetyl-CoA) and glyoxylate to form malate and CoA.</text>
</comment>
<comment type="catalytic activity">
    <reaction evidence="1">
        <text>glyoxylate + acetyl-CoA + H2O = (S)-malate + CoA + H(+)</text>
        <dbReference type="Rhea" id="RHEA:18181"/>
        <dbReference type="ChEBI" id="CHEBI:15377"/>
        <dbReference type="ChEBI" id="CHEBI:15378"/>
        <dbReference type="ChEBI" id="CHEBI:15589"/>
        <dbReference type="ChEBI" id="CHEBI:36655"/>
        <dbReference type="ChEBI" id="CHEBI:57287"/>
        <dbReference type="ChEBI" id="CHEBI:57288"/>
        <dbReference type="EC" id="2.3.3.9"/>
    </reaction>
</comment>
<comment type="cofactor">
    <cofactor evidence="1">
        <name>Mg(2+)</name>
        <dbReference type="ChEBI" id="CHEBI:18420"/>
    </cofactor>
</comment>
<comment type="pathway">
    <text evidence="1">Carbohydrate metabolism; glyoxylate cycle; (S)-malate from isocitrate: step 2/2.</text>
</comment>
<comment type="subunit">
    <text evidence="1">Monomer.</text>
</comment>
<comment type="subcellular location">
    <subcellularLocation>
        <location evidence="1">Cytoplasm</location>
    </subcellularLocation>
</comment>
<comment type="similarity">
    <text evidence="1">Belongs to the malate synthase family. GlcB subfamily.</text>
</comment>
<protein>
    <recommendedName>
        <fullName evidence="1">Malate synthase G</fullName>
        <ecNumber evidence="1">2.3.3.9</ecNumber>
    </recommendedName>
</protein>
<sequence>MSRVDKNGLAIETVLHDFLVEEVLPGLAVDADKFFADFSAIVHDLAPKNCALLAKRDELQVKIDDWYRRHGAPADMDEYQSFLREIGYLLPEGSDFQVSTQNVDPEIASIAGPQLVVPVMNARYALNAANARWGSLYDALYGTDAIPESDGAEKGKSYNPKRGEKVIAWVRDFLDTSAPLQDCRWKDVGSFAVKDGALVVRSIDGEQAMLTDGKHFAGYRGDAAAPTHILLKNNGIHIEIVIDAATTIGKADPAHISDVWLESAITTIMDCEDSIAAVDAEDKVVVYRNWLGLMKGDLQEEVAKGGTSFIRTLNPDLQYAGPDGAAFEVHRRSLMLVRNVGHLMISPAILDRDGNEVPEGIMDAAITGLIALYDIGPSGRRKNSRTGSMYVVKPKMHGPEEVAFAVEIFSRVEDALGLPRNTIKMGIMDEERRTTVNLKECIRAARERVVFINTGFLDRTGDEIHTSMEAGPMIRKGDMRQAAWISAYENWNVDIGLECGLAGHAQIGKGMWAMPDLMAAMLEQKIAHPKAGANTAWVPSPTAATLHATHYHRVNVARVQQGLKDRARAKLSDILSVPVAVRPNWTPEEIQRELDNNAQGILGYVVRWVDQGVGCSKVPDINNVGLMEDRATLRISAQHMANWLHHKVVTEAQIIETMRRMAAVVDRQNASDPAYQPMAGNFDDSIAFQAALDLVLKGREQPNGYTEPVLHRRRLELKAKHTA</sequence>